<dbReference type="EC" id="6.1.1.4" evidence="1"/>
<dbReference type="EMBL" id="CP001074">
    <property type="protein sequence ID" value="ACE93336.1"/>
    <property type="molecule type" value="Genomic_DNA"/>
</dbReference>
<dbReference type="SMR" id="B3PS46"/>
<dbReference type="KEGG" id="rec:RHECIAT_CH0004409"/>
<dbReference type="eggNOG" id="COG0495">
    <property type="taxonomic scope" value="Bacteria"/>
</dbReference>
<dbReference type="HOGENOM" id="CLU_004427_0_0_5"/>
<dbReference type="Proteomes" id="UP000008817">
    <property type="component" value="Chromosome"/>
</dbReference>
<dbReference type="GO" id="GO:0005829">
    <property type="term" value="C:cytosol"/>
    <property type="evidence" value="ECO:0007669"/>
    <property type="project" value="TreeGrafter"/>
</dbReference>
<dbReference type="GO" id="GO:0002161">
    <property type="term" value="F:aminoacyl-tRNA deacylase activity"/>
    <property type="evidence" value="ECO:0007669"/>
    <property type="project" value="InterPro"/>
</dbReference>
<dbReference type="GO" id="GO:0005524">
    <property type="term" value="F:ATP binding"/>
    <property type="evidence" value="ECO:0007669"/>
    <property type="project" value="UniProtKB-UniRule"/>
</dbReference>
<dbReference type="GO" id="GO:0004823">
    <property type="term" value="F:leucine-tRNA ligase activity"/>
    <property type="evidence" value="ECO:0007669"/>
    <property type="project" value="UniProtKB-UniRule"/>
</dbReference>
<dbReference type="GO" id="GO:0006429">
    <property type="term" value="P:leucyl-tRNA aminoacylation"/>
    <property type="evidence" value="ECO:0007669"/>
    <property type="project" value="UniProtKB-UniRule"/>
</dbReference>
<dbReference type="CDD" id="cd07958">
    <property type="entry name" value="Anticodon_Ia_Leu_BEm"/>
    <property type="match status" value="1"/>
</dbReference>
<dbReference type="CDD" id="cd00812">
    <property type="entry name" value="LeuRS_core"/>
    <property type="match status" value="1"/>
</dbReference>
<dbReference type="FunFam" id="1.10.730.10:FF:000002">
    <property type="entry name" value="Leucine--tRNA ligase"/>
    <property type="match status" value="1"/>
</dbReference>
<dbReference type="FunFam" id="3.40.50.620:FF:000003">
    <property type="entry name" value="Leucine--tRNA ligase"/>
    <property type="match status" value="1"/>
</dbReference>
<dbReference type="Gene3D" id="2.20.28.290">
    <property type="match status" value="1"/>
</dbReference>
<dbReference type="Gene3D" id="3.10.20.590">
    <property type="match status" value="1"/>
</dbReference>
<dbReference type="Gene3D" id="3.40.50.620">
    <property type="entry name" value="HUPs"/>
    <property type="match status" value="2"/>
</dbReference>
<dbReference type="Gene3D" id="1.10.730.10">
    <property type="entry name" value="Isoleucyl-tRNA Synthetase, Domain 1"/>
    <property type="match status" value="1"/>
</dbReference>
<dbReference type="Gene3D" id="3.90.740.10">
    <property type="entry name" value="Valyl/Leucyl/Isoleucyl-tRNA synthetase, editing domain"/>
    <property type="match status" value="1"/>
</dbReference>
<dbReference type="HAMAP" id="MF_00049_B">
    <property type="entry name" value="Leu_tRNA_synth_B"/>
    <property type="match status" value="1"/>
</dbReference>
<dbReference type="InterPro" id="IPR001412">
    <property type="entry name" value="aa-tRNA-synth_I_CS"/>
</dbReference>
<dbReference type="InterPro" id="IPR002300">
    <property type="entry name" value="aa-tRNA-synth_Ia"/>
</dbReference>
<dbReference type="InterPro" id="IPR002302">
    <property type="entry name" value="Leu-tRNA-ligase"/>
</dbReference>
<dbReference type="InterPro" id="IPR025709">
    <property type="entry name" value="Leu_tRNA-synth_edit"/>
</dbReference>
<dbReference type="InterPro" id="IPR013155">
    <property type="entry name" value="M/V/L/I-tRNA-synth_anticd-bd"/>
</dbReference>
<dbReference type="InterPro" id="IPR015413">
    <property type="entry name" value="Methionyl/Leucyl_tRNA_Synth"/>
</dbReference>
<dbReference type="InterPro" id="IPR014729">
    <property type="entry name" value="Rossmann-like_a/b/a_fold"/>
</dbReference>
<dbReference type="InterPro" id="IPR009080">
    <property type="entry name" value="tRNAsynth_Ia_anticodon-bd"/>
</dbReference>
<dbReference type="InterPro" id="IPR009008">
    <property type="entry name" value="Val/Leu/Ile-tRNA-synth_edit"/>
</dbReference>
<dbReference type="NCBIfam" id="TIGR00396">
    <property type="entry name" value="leuS_bact"/>
    <property type="match status" value="1"/>
</dbReference>
<dbReference type="PANTHER" id="PTHR43740:SF2">
    <property type="entry name" value="LEUCINE--TRNA LIGASE, MITOCHONDRIAL"/>
    <property type="match status" value="1"/>
</dbReference>
<dbReference type="PANTHER" id="PTHR43740">
    <property type="entry name" value="LEUCYL-TRNA SYNTHETASE"/>
    <property type="match status" value="1"/>
</dbReference>
<dbReference type="Pfam" id="PF08264">
    <property type="entry name" value="Anticodon_1"/>
    <property type="match status" value="1"/>
</dbReference>
<dbReference type="Pfam" id="PF00133">
    <property type="entry name" value="tRNA-synt_1"/>
    <property type="match status" value="2"/>
</dbReference>
<dbReference type="Pfam" id="PF13603">
    <property type="entry name" value="tRNA-synt_1_2"/>
    <property type="match status" value="1"/>
</dbReference>
<dbReference type="Pfam" id="PF09334">
    <property type="entry name" value="tRNA-synt_1g"/>
    <property type="match status" value="1"/>
</dbReference>
<dbReference type="PRINTS" id="PR00985">
    <property type="entry name" value="TRNASYNTHLEU"/>
</dbReference>
<dbReference type="SUPFAM" id="SSF47323">
    <property type="entry name" value="Anticodon-binding domain of a subclass of class I aminoacyl-tRNA synthetases"/>
    <property type="match status" value="1"/>
</dbReference>
<dbReference type="SUPFAM" id="SSF52374">
    <property type="entry name" value="Nucleotidylyl transferase"/>
    <property type="match status" value="1"/>
</dbReference>
<dbReference type="SUPFAM" id="SSF50677">
    <property type="entry name" value="ValRS/IleRS/LeuRS editing domain"/>
    <property type="match status" value="1"/>
</dbReference>
<dbReference type="PROSITE" id="PS00178">
    <property type="entry name" value="AA_TRNA_LIGASE_I"/>
    <property type="match status" value="1"/>
</dbReference>
<proteinExistence type="inferred from homology"/>
<gene>
    <name evidence="1" type="primary">leuS</name>
    <name type="ordered locus">RHECIAT_CH0004409</name>
</gene>
<name>SYL_RHIE6</name>
<reference key="1">
    <citation type="journal article" date="2010" name="Appl. Environ. Microbiol.">
        <title>Conserved symbiotic plasmid DNA sequences in the multireplicon pangenomic structure of Rhizobium etli.</title>
        <authorList>
            <person name="Gonzalez V."/>
            <person name="Acosta J.L."/>
            <person name="Santamaria R.I."/>
            <person name="Bustos P."/>
            <person name="Fernandez J.L."/>
            <person name="Hernandez Gonzalez I.L."/>
            <person name="Diaz R."/>
            <person name="Flores M."/>
            <person name="Palacios R."/>
            <person name="Mora J."/>
            <person name="Davila G."/>
        </authorList>
    </citation>
    <scope>NUCLEOTIDE SEQUENCE [LARGE SCALE GENOMIC DNA]</scope>
    <source>
        <strain>CIAT 652</strain>
    </source>
</reference>
<sequence length="876" mass="97751">MATERYNPRDAEPRWQQKWNEDKVFETDNADPREKYYVLEMFPYPSGRIHMGHVRNYAMGDVVARYKRARGYNVLHPMGWDAFGMPAENAAMERGVHPASWTYQNIASMKAQLKAMGLSLDWSREFATCDVEYYQHQQHLFLDFLEKGLVYRKQSKVNWDPVDNTVLANEQVIDGRGWRSGALVEQRELTQWFFKITDFSQDLLDALDTLDQWPEKVRLMQKNWIGRSEGLTVRWEIVPETAPAGETEITVYTTRPDTLFGASFLAIAADHPLAKDAAAKNVEIEAFCEECRRAGTSLAALETAEKKGLDTGIRVRHPLDPTWELPVYIANFVLMDYGTGAIFGCPSGDQRDLDFARKYGLPVVAVVMPSDGDAASFAVGDTAYDGDGVMINSRFLDGKTTEEAFNIVADRLSAASLGNTPVAERKVNFRLRDWGISRQRYWGCPIPVIHCDACGVVPVPKTDLPVKLPEDVTFDQPGNPLDRHPTWRHVTCPHCGKDARRETDTMDTFVDSSWYFTRFTAPWEAKPTDPEAANRWLPVDQYIGGIEHAILHLLYSRFFTRAMRETGHVAASEPFKGLFTQGMVVHETYSRKAGAGREWVAPADIRIEEIDGKRRALLLATGEEVAIGSIEKMSKSKKNVVDPDDIIASYGADTARFFVLSDSPPERDVIWSEAGVEGAHRFTQRLWRLISEAAGVLSTVAAAPASEGEALAISQAAHKTLKAVQNDYDKLWFNKAVARIYELVNALAAPLTKVAAGEGDIAYRAAVRDAAEILIQLVAPMTPHLAEECWATLGNTGLLARTGWPRFVEALVVENDVVLPVQINGKKRAELTISRDADQNAVTDAVLELDAVKNVLNGQAPKKIIVVPQRIVNIVV</sequence>
<feature type="chain" id="PRO_1000091350" description="Leucine--tRNA ligase">
    <location>
        <begin position="1"/>
        <end position="876"/>
    </location>
</feature>
<feature type="short sequence motif" description="'HIGH' region">
    <location>
        <begin position="43"/>
        <end position="53"/>
    </location>
</feature>
<feature type="short sequence motif" description="'KMSKS' region">
    <location>
        <begin position="632"/>
        <end position="636"/>
    </location>
</feature>
<feature type="binding site" evidence="1">
    <location>
        <position position="635"/>
    </location>
    <ligand>
        <name>ATP</name>
        <dbReference type="ChEBI" id="CHEBI:30616"/>
    </ligand>
</feature>
<keyword id="KW-0030">Aminoacyl-tRNA synthetase</keyword>
<keyword id="KW-0067">ATP-binding</keyword>
<keyword id="KW-0963">Cytoplasm</keyword>
<keyword id="KW-0436">Ligase</keyword>
<keyword id="KW-0547">Nucleotide-binding</keyword>
<keyword id="KW-0648">Protein biosynthesis</keyword>
<organism>
    <name type="scientific">Rhizobium etli (strain CIAT 652)</name>
    <dbReference type="NCBI Taxonomy" id="491916"/>
    <lineage>
        <taxon>Bacteria</taxon>
        <taxon>Pseudomonadati</taxon>
        <taxon>Pseudomonadota</taxon>
        <taxon>Alphaproteobacteria</taxon>
        <taxon>Hyphomicrobiales</taxon>
        <taxon>Rhizobiaceae</taxon>
        <taxon>Rhizobium/Agrobacterium group</taxon>
        <taxon>Rhizobium</taxon>
    </lineage>
</organism>
<evidence type="ECO:0000255" key="1">
    <source>
        <dbReference type="HAMAP-Rule" id="MF_00049"/>
    </source>
</evidence>
<protein>
    <recommendedName>
        <fullName evidence="1">Leucine--tRNA ligase</fullName>
        <ecNumber evidence="1">6.1.1.4</ecNumber>
    </recommendedName>
    <alternativeName>
        <fullName evidence="1">Leucyl-tRNA synthetase</fullName>
        <shortName evidence="1">LeuRS</shortName>
    </alternativeName>
</protein>
<comment type="catalytic activity">
    <reaction evidence="1">
        <text>tRNA(Leu) + L-leucine + ATP = L-leucyl-tRNA(Leu) + AMP + diphosphate</text>
        <dbReference type="Rhea" id="RHEA:11688"/>
        <dbReference type="Rhea" id="RHEA-COMP:9613"/>
        <dbReference type="Rhea" id="RHEA-COMP:9622"/>
        <dbReference type="ChEBI" id="CHEBI:30616"/>
        <dbReference type="ChEBI" id="CHEBI:33019"/>
        <dbReference type="ChEBI" id="CHEBI:57427"/>
        <dbReference type="ChEBI" id="CHEBI:78442"/>
        <dbReference type="ChEBI" id="CHEBI:78494"/>
        <dbReference type="ChEBI" id="CHEBI:456215"/>
        <dbReference type="EC" id="6.1.1.4"/>
    </reaction>
</comment>
<comment type="subcellular location">
    <subcellularLocation>
        <location evidence="1">Cytoplasm</location>
    </subcellularLocation>
</comment>
<comment type="similarity">
    <text evidence="1">Belongs to the class-I aminoacyl-tRNA synthetase family.</text>
</comment>
<accession>B3PS46</accession>